<name>3SA2_NAJMO</name>
<comment type="function">
    <text evidence="1 2 4">Shows cytolytic activity on many different cells by forming pore in lipid membranes. In vivo, increases heart rate or kills the animal by cardiac arrest. In addition, it binds to heparin with high affinity, interacts with Kv channel-interacting protein 1 (KCNIP1) in a calcium-independent manner, and binds to integrin alpha-V/beta-3 (ITGAV/ITGB3) with moderate affinity.</text>
</comment>
<comment type="subunit">
    <text evidence="1">Monomer in solution; Homodimer and oligomer in the presence of negatively charged lipids forming a pore with a size ranging between 20 and 30 Angstroms.</text>
</comment>
<comment type="subcellular location">
    <subcellularLocation>
        <location evidence="5">Secreted</location>
    </subcellularLocation>
    <subcellularLocation>
        <location evidence="1">Target cell membrane</location>
    </subcellularLocation>
</comment>
<comment type="tissue specificity">
    <text evidence="7">Expressed by the venom gland.</text>
</comment>
<comment type="toxic dose">
    <text>LD(50) is 1.11 mg/kg by intravenous injection.</text>
</comment>
<comment type="miscellaneous">
    <text evidence="8">Is classified as a S-type cytotoxin, since a serine residue stands at position 30 (Ser-29 in standard classification). S-type are generally found to exhibit higher muscle cell depolarization than P-type.</text>
</comment>
<comment type="similarity">
    <text evidence="7">Belongs to the three-finger toxin family. Short-chain subfamily. Type IA cytotoxin sub-subfamily.</text>
</comment>
<dbReference type="PIR" id="A01729">
    <property type="entry name" value="H3NJ2M"/>
</dbReference>
<dbReference type="BMRB" id="P01469"/>
<dbReference type="SMR" id="P01469"/>
<dbReference type="GO" id="GO:0005576">
    <property type="term" value="C:extracellular region"/>
    <property type="evidence" value="ECO:0007669"/>
    <property type="project" value="UniProtKB-SubCell"/>
</dbReference>
<dbReference type="GO" id="GO:0016020">
    <property type="term" value="C:membrane"/>
    <property type="evidence" value="ECO:0007669"/>
    <property type="project" value="UniProtKB-KW"/>
</dbReference>
<dbReference type="GO" id="GO:0044218">
    <property type="term" value="C:other organism cell membrane"/>
    <property type="evidence" value="ECO:0007669"/>
    <property type="project" value="UniProtKB-KW"/>
</dbReference>
<dbReference type="GO" id="GO:0090729">
    <property type="term" value="F:toxin activity"/>
    <property type="evidence" value="ECO:0007669"/>
    <property type="project" value="UniProtKB-KW"/>
</dbReference>
<dbReference type="GO" id="GO:0031640">
    <property type="term" value="P:killing of cells of another organism"/>
    <property type="evidence" value="ECO:0007669"/>
    <property type="project" value="UniProtKB-KW"/>
</dbReference>
<dbReference type="CDD" id="cd00206">
    <property type="entry name" value="TFP_snake_toxin"/>
    <property type="match status" value="1"/>
</dbReference>
<dbReference type="FunFam" id="2.10.60.10:FF:000024">
    <property type="entry name" value="Cytotoxin 1"/>
    <property type="match status" value="1"/>
</dbReference>
<dbReference type="Gene3D" id="2.10.60.10">
    <property type="entry name" value="CD59"/>
    <property type="match status" value="1"/>
</dbReference>
<dbReference type="InterPro" id="IPR003572">
    <property type="entry name" value="Cytotoxin_Cobra"/>
</dbReference>
<dbReference type="InterPro" id="IPR003571">
    <property type="entry name" value="Snake_3FTx"/>
</dbReference>
<dbReference type="InterPro" id="IPR045860">
    <property type="entry name" value="Snake_toxin-like_sf"/>
</dbReference>
<dbReference type="InterPro" id="IPR018354">
    <property type="entry name" value="Snake_toxin_con_site"/>
</dbReference>
<dbReference type="InterPro" id="IPR054131">
    <property type="entry name" value="Toxin_cobra-type"/>
</dbReference>
<dbReference type="Pfam" id="PF21947">
    <property type="entry name" value="Toxin_cobra-type"/>
    <property type="match status" value="1"/>
</dbReference>
<dbReference type="PRINTS" id="PR00282">
    <property type="entry name" value="CYTOTOXIN"/>
</dbReference>
<dbReference type="SUPFAM" id="SSF57302">
    <property type="entry name" value="Snake toxin-like"/>
    <property type="match status" value="1"/>
</dbReference>
<dbReference type="PROSITE" id="PS00272">
    <property type="entry name" value="SNAKE_TOXIN"/>
    <property type="match status" value="1"/>
</dbReference>
<keyword id="KW-0123">Cardiotoxin</keyword>
<keyword id="KW-0204">Cytolysis</keyword>
<keyword id="KW-0903">Direct protein sequencing</keyword>
<keyword id="KW-1015">Disulfide bond</keyword>
<keyword id="KW-0472">Membrane</keyword>
<keyword id="KW-0964">Secreted</keyword>
<keyword id="KW-1052">Target cell membrane</keyword>
<keyword id="KW-1053">Target membrane</keyword>
<keyword id="KW-0800">Toxin</keyword>
<evidence type="ECO:0000250" key="1">
    <source>
        <dbReference type="UniProtKB" id="P60301"/>
    </source>
</evidence>
<evidence type="ECO:0000250" key="2">
    <source>
        <dbReference type="UniProtKB" id="P60304"/>
    </source>
</evidence>
<evidence type="ECO:0000269" key="3">
    <source>
    </source>
</evidence>
<evidence type="ECO:0000269" key="4">
    <source>
    </source>
</evidence>
<evidence type="ECO:0000269" key="5">
    <source ref="1"/>
</evidence>
<evidence type="ECO:0000303" key="6">
    <source>
    </source>
</evidence>
<evidence type="ECO:0000305" key="7"/>
<evidence type="ECO:0000305" key="8">
    <source>
    </source>
</evidence>
<proteinExistence type="evidence at protein level"/>
<sequence length="60" mass="6800">LKCNQLIPPFWKTCPKGKNLCYKMTMRGASKVPVKRGCIDVCPKSSLLIKYMCCNTDKCN</sequence>
<organism>
    <name type="scientific">Naja mossambica</name>
    <name type="common">Mozambique spitting cobra</name>
    <dbReference type="NCBI Taxonomy" id="8644"/>
    <lineage>
        <taxon>Eukaryota</taxon>
        <taxon>Metazoa</taxon>
        <taxon>Chordata</taxon>
        <taxon>Craniata</taxon>
        <taxon>Vertebrata</taxon>
        <taxon>Euteleostomi</taxon>
        <taxon>Lepidosauria</taxon>
        <taxon>Squamata</taxon>
        <taxon>Bifurcata</taxon>
        <taxon>Unidentata</taxon>
        <taxon>Episquamata</taxon>
        <taxon>Toxicofera</taxon>
        <taxon>Serpentes</taxon>
        <taxon>Colubroidea</taxon>
        <taxon>Elapidae</taxon>
        <taxon>Elapinae</taxon>
        <taxon>Naja</taxon>
    </lineage>
</organism>
<reference key="1">
    <citation type="journal article" date="1974" name="Biochim. Biophys. Acta">
        <title>Snake venom toxins. The amino acid sequences of three cytotoxin homologues from Naja mossambica mossambica venom.</title>
        <authorList>
            <person name="Louw A.I."/>
        </authorList>
    </citation>
    <scope>PROTEIN SEQUENCE</scope>
    <scope>SUBCELLULAR LOCATION</scope>
    <source>
        <tissue>Venom</tissue>
    </source>
</reference>
<reference key="2">
    <citation type="journal article" date="1994" name="J. Biol. Chem.">
        <title>Two distinct types of cardiotoxin as revealed by the structure and activity relationship of their interaction with zwitterionic phospholipid dispersions.</title>
        <authorList>
            <person name="Chien K.-Y."/>
            <person name="Chiang C.-M."/>
            <person name="Hseu Y.-C."/>
            <person name="Vyas A.A."/>
            <person name="Rule G.S."/>
            <person name="Wu W.-G."/>
        </authorList>
    </citation>
    <scope>FUNCTION</scope>
    <scope>APPARTENANCE TO S-TYPE CYTOTOXIN GROUP</scope>
</reference>
<reference key="3">
    <citation type="journal article" date="1987" name="Eur. J. Biochem.">
        <title>Sequence-specific 1H-NMR assignments and determination of the secondary structure in aqueous solution of the cardiotoxins CTXIIa and CTXIIb from Naja mossambica mossambica.</title>
        <authorList>
            <person name="Otting G."/>
            <person name="Steinmetz W.E."/>
            <person name="Bougis P.E."/>
            <person name="Rochat H."/>
            <person name="Wuethrich K."/>
        </authorList>
    </citation>
    <scope>STRUCTURE BY NMR</scope>
    <scope>DISULFIDE BONDS</scope>
</reference>
<protein>
    <recommendedName>
        <fullName>Cytotoxin 2</fullName>
    </recommendedName>
    <alternativeName>
        <fullName evidence="6">CTX M2</fullName>
    </alternativeName>
    <alternativeName>
        <fullName>Cardiotoxin IIA</fullName>
        <shortName>CTX IIA</shortName>
    </alternativeName>
    <alternativeName>
        <fullName>Cytotoxin V(II)2</fullName>
    </alternativeName>
</protein>
<accession>P01469</accession>
<feature type="chain" id="PRO_0000093506" description="Cytotoxin 2" evidence="5">
    <location>
        <begin position="1"/>
        <end position="60"/>
    </location>
</feature>
<feature type="disulfide bond" evidence="3">
    <location>
        <begin position="3"/>
        <end position="21"/>
    </location>
</feature>
<feature type="disulfide bond" evidence="3">
    <location>
        <begin position="14"/>
        <end position="38"/>
    </location>
</feature>
<feature type="disulfide bond" evidence="3">
    <location>
        <begin position="42"/>
        <end position="53"/>
    </location>
</feature>
<feature type="disulfide bond" evidence="3">
    <location>
        <begin position="54"/>
        <end position="59"/>
    </location>
</feature>